<keyword id="KW-0002">3D-structure</keyword>
<keyword id="KW-0007">Acetylation</keyword>
<keyword id="KW-0013">ADP-ribosylation</keyword>
<keyword id="KW-0963">Cytoplasm</keyword>
<keyword id="KW-0903">Direct protein sequencing</keyword>
<keyword id="KW-1017">Isopeptide bond</keyword>
<keyword id="KW-0479">Metal-binding</keyword>
<keyword id="KW-0539">Nucleus</keyword>
<keyword id="KW-0597">Phosphoprotein</keyword>
<keyword id="KW-1185">Reference proteome</keyword>
<keyword id="KW-0677">Repeat</keyword>
<keyword id="KW-0687">Ribonucleoprotein</keyword>
<keyword id="KW-0689">Ribosomal protein</keyword>
<keyword id="KW-0832">Ubl conjugation</keyword>
<keyword id="KW-0862">Zinc</keyword>
<keyword id="KW-0863">Zinc-finger</keyword>
<gene>
    <name type="primary">RPS27A</name>
    <name type="synonym">UBA80</name>
    <name type="synonym">UBCEP1</name>
</gene>
<proteinExistence type="evidence at protein level"/>
<evidence type="ECO:0000250" key="1"/>
<evidence type="ECO:0000250" key="2">
    <source>
        <dbReference type="UniProtKB" id="P62979"/>
    </source>
</evidence>
<evidence type="ECO:0000250" key="3">
    <source>
        <dbReference type="UniProtKB" id="P62983"/>
    </source>
</evidence>
<evidence type="ECO:0000255" key="4">
    <source>
        <dbReference type="PROSITE-ProRule" id="PRU00214"/>
    </source>
</evidence>
<evidence type="ECO:0000256" key="5">
    <source>
        <dbReference type="SAM" id="MobiDB-lite"/>
    </source>
</evidence>
<evidence type="ECO:0000305" key="6"/>
<evidence type="ECO:0007829" key="7">
    <source>
        <dbReference type="PDB" id="5JQS"/>
    </source>
</evidence>
<evidence type="ECO:0007829" key="8">
    <source>
        <dbReference type="PDB" id="5XVE"/>
    </source>
</evidence>
<evidence type="ECO:0007829" key="9">
    <source>
        <dbReference type="PDB" id="6Q01"/>
    </source>
</evidence>
<name>RS27A_BOVIN</name>
<accession>P62992</accession>
<accession>O97577</accession>
<accession>P02248</accession>
<accession>P02249</accession>
<accession>P02250</accession>
<accession>P0CG52</accession>
<accession>P62990</accession>
<accession>P80169</accession>
<accession>Q01235</accession>
<accession>Q24K23</accession>
<accession>Q28169</accession>
<accession>Q28170</accession>
<accession>Q29120</accession>
<accession>Q3T0V5</accession>
<accession>Q3ZCE3</accession>
<accession>Q862C1</accession>
<accession>Q862F4</accession>
<accession>Q862M4</accession>
<accession>Q862T5</accession>
<accession>Q862X8</accession>
<accession>Q91887</accession>
<accession>Q91888</accession>
<comment type="function">
    <molecule>Ubiquitin</molecule>
    <text evidence="2">Exists either covalently attached to another protein, or free (unanchored). When covalently bound, it is conjugated to target proteins via an isopeptide bond either as a monomer (monoubiquitin), a polymer linked via different Lys residues of the ubiquitin (polyubiquitin chains) or a linear polymer linked via the initiator Met of the ubiquitin (linear polyubiquitin chains). Polyubiquitin chains, when attached to a target protein, have different functions depending on the Lys residue of the ubiquitin that is linked: Lys-6-linked may be involved in DNA repair; Lys-11-linked is involved in ERAD (endoplasmic reticulum-associated degradation) and in cell-cycle regulation; Lys-29-linked is involved in proteotoxic stress response and cell cycle; Lys-33-linked is involved in kinase modification; Lys-48-linked is involved in protein degradation via the proteasome; Lys-63-linked is involved in endocytosis, DNA-damage responses as well as in signaling processes leading to activation of the transcription factor NF-kappa-B. Linear polymer chains formed via attachment by the initiator Met lead to cell signaling. Ubiquitin is usually conjugated to Lys residues of target proteins, however, in rare cases, conjugation to Cys or Ser residues has been observed. When polyubiquitin is free (unanchored-polyubiquitin), it also has distinct roles, such as in activation of protein kinases, and in signaling.</text>
</comment>
<comment type="function">
    <molecule>Small ribosomal subunit protein eS31</molecule>
    <text evidence="2">Component of the 40S subunit of the ribosome. Part of the small subunit (SSU) processome, first precursor of the small eukaryotic ribosomal subunit. During the assembly of the SSU processome in the nucleolus, many ribosome biogenesis factors, an RNA chaperone and ribosomal proteins associate with the nascent pre-rRNA and work in concert to generate RNA folding, modifications, rearrangements and cleavage as well as targeted degradation of pre-ribosomal RNA by the RNA exosome.</text>
</comment>
<comment type="subunit">
    <molecule>Small ribosomal subunit protein eS31</molecule>
    <text evidence="2">Part of the 40S ribosomal subunit. Part of the small subunit (SSU) processome, composed of more than 70 proteins and the RNA chaperone small nucleolar RNA (snoRNA) U3.</text>
</comment>
<comment type="interaction">
    <interactant intactId="EBI-25820711">
        <id>PRO_0000396474</id>
    </interactant>
    <interactant intactId="EBI-25635190">
        <id>PRO_0000338257</id>
        <label>1a</label>
        <dbReference type="UniProtKB" id="P0C6U8"/>
    </interactant>
    <organismsDiffer>true</organismsDiffer>
    <experiments>2</experiments>
</comment>
<comment type="subcellular location">
    <molecule>Ubiquitin</molecule>
    <subcellularLocation>
        <location evidence="1">Cytoplasm</location>
    </subcellularLocation>
    <subcellularLocation>
        <location evidence="1">Nucleus</location>
    </subcellularLocation>
</comment>
<comment type="subcellular location">
    <molecule>Small ribosomal subunit protein eS31</molecule>
    <subcellularLocation>
        <location evidence="2">Nucleus</location>
        <location evidence="2">Nucleolus</location>
    </subcellularLocation>
</comment>
<comment type="PTM">
    <molecule>Ubiquitin</molecule>
    <text evidence="2">Phosphorylated at Ser-65 by PINK1 during mitophagy. Phosphorylated ubiquitin specifically binds and activates parkin (PRKN), triggering mitophagy. Phosphorylation does not affect E1-mediated E2 charging of ubiquitin but affects discharging of E2 enzymes to form polyubiquitin chains. It also affects deubiquitination by deubiquitinase enzymes such as USP30.</text>
</comment>
<comment type="PTM">
    <molecule>Ubiquitin</molecule>
    <text evidence="2">Mono-ADP-ribosylated at the C-terminus by PARP9, a component of the PPAR9-DTX3L complex. ADP-ribosylation requires processing by E1 and E2 enzymes and prevents ubiquitin conjugation to substrates such as histones.</text>
</comment>
<comment type="PTM">
    <molecule>Small ribosomal subunit protein eS31</molecule>
    <text evidence="2">Monoubiquitinated at Lys-107 and Lys-113 by RNF25 in response to ribosome collisions (ribosome stalling): ubiquitination promotes subsequent activation of RNF14, leading to EEF1A1 ubiquitination and degradation and rescue of stalled ribosomes. Deubiquitination at Lys-113 by USP16 is required for maturation of the 40S ribosomal complex.</text>
</comment>
<comment type="miscellaneous">
    <text>Ubiquitin is encoded by 4 different genes. Uba52 and Rps27a genes code for a single copy of ubiquitin fused to the ribosomal proteins eL40 and eS31, respectively. UBB and UBC genes code for a polyubiquitin precursor with exact head to tail repeats, the number of repeats differ between species and strains.</text>
</comment>
<comment type="similarity">
    <text evidence="6">In the N-terminal section; belongs to the ubiquitin family.</text>
</comment>
<comment type="similarity">
    <text evidence="6">In the C-terminal section; belongs to the eukaryotic ribosomal protein eS31 family.</text>
</comment>
<reference key="1">
    <citation type="journal article" date="1998" name="J. Virol.">
        <title>Ribosomal S27a coding sequences upstream of ubiquitin coding sequences in the genome of a pestivirus.</title>
        <authorList>
            <person name="Becher P."/>
            <person name="Orlich M."/>
            <person name="Thiel H.J."/>
        </authorList>
    </citation>
    <scope>NUCLEOTIDE SEQUENCE [MRNA]</scope>
</reference>
<reference key="2">
    <citation type="journal article" date="2003" name="Mol. Reprod. Dev.">
        <title>Characterization of gene expression profiles in early bovine pregnancy using a custom cDNA microarray.</title>
        <authorList>
            <person name="Ishiwata H."/>
            <person name="Katsuma S."/>
            <person name="Kizaki K."/>
            <person name="Patel O.V."/>
            <person name="Nakano H."/>
            <person name="Takahashi T."/>
            <person name="Imai K."/>
            <person name="Hirasawa A."/>
            <person name="Shiojima S."/>
            <person name="Ikawa H."/>
            <person name="Suzuki Y."/>
            <person name="Tsujimoto G."/>
            <person name="Izaike Y."/>
            <person name="Todoroki J."/>
            <person name="Hashizume K."/>
        </authorList>
    </citation>
    <scope>NUCLEOTIDE SEQUENCE [MRNA]</scope>
</reference>
<reference key="3">
    <citation type="submission" date="2005-08" db="EMBL/GenBank/DDBJ databases">
        <authorList>
            <consortium name="NIH - Mammalian Gene Collection (MGC) project"/>
        </authorList>
    </citation>
    <scope>NUCLEOTIDE SEQUENCE [LARGE SCALE MRNA]</scope>
    <source>
        <strain>Crossbred X Angus</strain>
        <tissue>Ileum</tissue>
        <tissue>Liver</tissue>
    </source>
</reference>
<reference key="4">
    <citation type="journal article" date="1975" name="Biochemistry">
        <title>The complete amino acid sequence of ubiquitin, an adenylate cyclase stimulating polypeptide probably universal in living cells.</title>
        <authorList>
            <person name="Schlesinger D.H."/>
            <person name="Goldstein G."/>
            <person name="Niall H.D."/>
        </authorList>
    </citation>
    <scope>PROTEIN SEQUENCE OF 1-74</scope>
</reference>
<reference key="5">
    <citation type="journal article" date="1980" name="Biochem. Biophys. Res. Commun.">
        <title>The biosynthesis of ubiquitin by parathyroid gland.</title>
        <authorList>
            <person name="Hamilton J.W."/>
            <person name="Rouse J.B."/>
        </authorList>
    </citation>
    <scope>PROTEIN SEQUENCE OF 1-50</scope>
</reference>
<reference key="6">
    <citation type="journal article" date="1992" name="Eur. J. Biochem.">
        <title>Ganglioside binding proteins of calf brain with ubiquitin-like N-terminals.</title>
        <authorList>
            <person name="Zdebska E."/>
            <person name="Antoniewicz J."/>
            <person name="Nilsson B."/>
            <person name="Sandhoff K."/>
            <person name="Fuerst W."/>
            <person name="Janik P."/>
            <person name="Koscielak J."/>
        </authorList>
    </citation>
    <scope>PROTEIN SEQUENCE OF 1-20</scope>
    <source>
        <tissue>Brain</tissue>
    </source>
</reference>
<organism>
    <name type="scientific">Bos taurus</name>
    <name type="common">Bovine</name>
    <dbReference type="NCBI Taxonomy" id="9913"/>
    <lineage>
        <taxon>Eukaryota</taxon>
        <taxon>Metazoa</taxon>
        <taxon>Chordata</taxon>
        <taxon>Craniata</taxon>
        <taxon>Vertebrata</taxon>
        <taxon>Euteleostomi</taxon>
        <taxon>Mammalia</taxon>
        <taxon>Eutheria</taxon>
        <taxon>Laurasiatheria</taxon>
        <taxon>Artiodactyla</taxon>
        <taxon>Ruminantia</taxon>
        <taxon>Pecora</taxon>
        <taxon>Bovidae</taxon>
        <taxon>Bovinae</taxon>
        <taxon>Bos</taxon>
    </lineage>
</organism>
<sequence length="156" mass="17965">MQIFVKTLTGKTITLEVEPSDTIENVKAKIQDKEGIPPDQQRLIFAGKQLEDGRTLSDYNIQKESTLHLVLRLRGGAKKRKKKSYTTPKKNKHKRKKVKLAVLKYYKVDENGKISRLRRECPSDECGAGVFMASHFDRHYCGKCCLTYCFNKPEDK</sequence>
<dbReference type="EMBL" id="AF058700">
    <property type="protein sequence ID" value="AAC77907.1"/>
    <property type="molecule type" value="mRNA"/>
</dbReference>
<dbReference type="EMBL" id="AB098891">
    <property type="protein sequence ID" value="BAC56381.1"/>
    <property type="molecule type" value="mRNA"/>
</dbReference>
<dbReference type="EMBL" id="BC102491">
    <property type="protein sequence ID" value="AAI02492.2"/>
    <property type="molecule type" value="mRNA"/>
</dbReference>
<dbReference type="PIR" id="A28144">
    <property type="entry name" value="A28144"/>
</dbReference>
<dbReference type="RefSeq" id="NP_777203.1">
    <property type="nucleotide sequence ID" value="NM_174778.1"/>
</dbReference>
<dbReference type="RefSeq" id="XP_005212615.1">
    <property type="nucleotide sequence ID" value="XM_005212558.4"/>
</dbReference>
<dbReference type="PDB" id="4M0W">
    <property type="method" value="X-ray"/>
    <property type="resolution" value="1.40 A"/>
    <property type="chains" value="B=1-76"/>
</dbReference>
<dbReference type="PDB" id="4Y1H">
    <property type="method" value="X-ray"/>
    <property type="resolution" value="1.40 A"/>
    <property type="chains" value="A=1-76"/>
</dbReference>
<dbReference type="PDB" id="4Z9S">
    <property type="method" value="X-ray"/>
    <property type="resolution" value="2.30 A"/>
    <property type="chains" value="A/B/C/D=1-76"/>
</dbReference>
<dbReference type="PDB" id="5BZ0">
    <property type="method" value="X-ray"/>
    <property type="resolution" value="2.10 A"/>
    <property type="chains" value="B=1-76"/>
</dbReference>
<dbReference type="PDB" id="5FER">
    <property type="method" value="X-ray"/>
    <property type="resolution" value="2.34 A"/>
    <property type="chains" value="C/F=1-76"/>
</dbReference>
<dbReference type="PDB" id="5JQS">
    <property type="method" value="X-ray"/>
    <property type="resolution" value="2.65 A"/>
    <property type="chains" value="D=1-76"/>
</dbReference>
<dbReference type="PDB" id="5MN9">
    <property type="method" value="X-ray"/>
    <property type="resolution" value="2.05 A"/>
    <property type="chains" value="A/B=1-76"/>
</dbReference>
<dbReference type="PDB" id="5XU8">
    <property type="method" value="X-ray"/>
    <property type="resolution" value="1.81 A"/>
    <property type="chains" value="B=1-76"/>
</dbReference>
<dbReference type="PDB" id="5XVE">
    <property type="method" value="X-ray"/>
    <property type="resolution" value="1.24 A"/>
    <property type="chains" value="B=1-76"/>
</dbReference>
<dbReference type="PDB" id="6DJW">
    <property type="method" value="X-ray"/>
    <property type="resolution" value="3.80 A"/>
    <property type="chains" value="B=1-74"/>
</dbReference>
<dbReference type="PDB" id="6DJX">
    <property type="method" value="X-ray"/>
    <property type="resolution" value="4.80 A"/>
    <property type="chains" value="B=1-76"/>
</dbReference>
<dbReference type="PDB" id="6E2B">
    <property type="method" value="X-ray"/>
    <property type="resolution" value="1.45 A"/>
    <property type="chains" value="A/C/E/G/I/P=1-76"/>
</dbReference>
<dbReference type="PDB" id="6Q01">
    <property type="method" value="X-ray"/>
    <property type="resolution" value="0.85 A"/>
    <property type="chains" value="A/B=1-76"/>
</dbReference>
<dbReference type="PDB" id="7F0U">
    <property type="method" value="X-ray"/>
    <property type="resolution" value="2.20 A"/>
    <property type="chains" value="C/D=1-76"/>
</dbReference>
<dbReference type="PDB" id="7NWH">
    <property type="method" value="EM"/>
    <property type="resolution" value="4.10 A"/>
    <property type="chains" value="ff=83-150"/>
</dbReference>
<dbReference type="PDBsum" id="4M0W"/>
<dbReference type="PDBsum" id="4Y1H"/>
<dbReference type="PDBsum" id="4Z9S"/>
<dbReference type="PDBsum" id="5BZ0"/>
<dbReference type="PDBsum" id="5FER"/>
<dbReference type="PDBsum" id="5JQS"/>
<dbReference type="PDBsum" id="5MN9"/>
<dbReference type="PDBsum" id="5XU8"/>
<dbReference type="PDBsum" id="5XVE"/>
<dbReference type="PDBsum" id="6DJW"/>
<dbReference type="PDBsum" id="6DJX"/>
<dbReference type="PDBsum" id="6E2B"/>
<dbReference type="PDBsum" id="6Q01"/>
<dbReference type="PDBsum" id="7F0U"/>
<dbReference type="PDBsum" id="7NWH"/>
<dbReference type="EMDB" id="EMD-12632"/>
<dbReference type="SMR" id="P62992"/>
<dbReference type="BioGRID" id="159949">
    <property type="interactions" value="3"/>
</dbReference>
<dbReference type="FunCoup" id="P62992">
    <property type="interactions" value="2307"/>
</dbReference>
<dbReference type="IntAct" id="P62992">
    <property type="interactions" value="1"/>
</dbReference>
<dbReference type="STRING" id="9913.ENSBTAP00000064008"/>
<dbReference type="PaxDb" id="9913-ENSBTAP00000033015"/>
<dbReference type="ABCD" id="P62992">
    <property type="antibodies" value="3 sequenced antibodies"/>
</dbReference>
<dbReference type="Ensembl" id="ENSBTAT00000075075.2">
    <property type="protein sequence ID" value="ENSBTAP00000061054.2"/>
    <property type="gene ID" value="ENSBTAG00000015473.7"/>
</dbReference>
<dbReference type="GeneID" id="286839"/>
<dbReference type="KEGG" id="bta:286839"/>
<dbReference type="CTD" id="6233"/>
<dbReference type="VEuPathDB" id="HostDB:ENSBTAG00000015473"/>
<dbReference type="VGNC" id="VGNC:34135">
    <property type="gene designation" value="RPS27A"/>
</dbReference>
<dbReference type="eggNOG" id="KOG0004">
    <property type="taxonomic scope" value="Eukaryota"/>
</dbReference>
<dbReference type="GeneTree" id="ENSGT00910000144152"/>
<dbReference type="HOGENOM" id="CLU_010412_2_0_1"/>
<dbReference type="InParanoid" id="P62992"/>
<dbReference type="OMA" id="GVFMAFH"/>
<dbReference type="OrthoDB" id="9711095at2759"/>
<dbReference type="TreeFam" id="TF300036"/>
<dbReference type="Reactome" id="R-BTA-110312">
    <property type="pathway name" value="Translesion synthesis by REV1"/>
</dbReference>
<dbReference type="Reactome" id="R-BTA-110314">
    <property type="pathway name" value="Recognition of DNA damage by PCNA-containing replication complex"/>
</dbReference>
<dbReference type="Reactome" id="R-BTA-110320">
    <property type="pathway name" value="Translesion Synthesis by POLH"/>
</dbReference>
<dbReference type="Reactome" id="R-BTA-1169091">
    <property type="pathway name" value="Activation of NF-kappaB in B cells"/>
</dbReference>
<dbReference type="Reactome" id="R-BTA-1234176">
    <property type="pathway name" value="Oxygen-dependent proline hydroxylation of Hypoxia-inducible Factor Alpha"/>
</dbReference>
<dbReference type="Reactome" id="R-BTA-1253288">
    <property type="pathway name" value="Downregulation of ERBB4 signaling"/>
</dbReference>
<dbReference type="Reactome" id="R-BTA-1295596">
    <property type="pathway name" value="Spry regulation of FGF signaling"/>
</dbReference>
<dbReference type="Reactome" id="R-BTA-1358803">
    <property type="pathway name" value="Downregulation of ERBB2:ERBB3 signaling"/>
</dbReference>
<dbReference type="Reactome" id="R-BTA-156827">
    <property type="pathway name" value="L13a-mediated translational silencing of Ceruloplasmin expression"/>
</dbReference>
<dbReference type="Reactome" id="R-BTA-168638">
    <property type="pathway name" value="NOD1/2 Signaling Pathway"/>
</dbReference>
<dbReference type="Reactome" id="R-BTA-174048">
    <property type="pathway name" value="APC/C:Cdc20 mediated degradation of Cyclin B"/>
</dbReference>
<dbReference type="Reactome" id="R-BTA-174084">
    <property type="pathway name" value="Autodegradation of Cdh1 by Cdh1:APC/C"/>
</dbReference>
<dbReference type="Reactome" id="R-BTA-174113">
    <property type="pathway name" value="SCF-beta-TrCP mediated degradation of Emi1"/>
</dbReference>
<dbReference type="Reactome" id="R-BTA-174154">
    <property type="pathway name" value="APC/C:Cdc20 mediated degradation of Securin"/>
</dbReference>
<dbReference type="Reactome" id="R-BTA-174178">
    <property type="pathway name" value="APC/C:Cdh1 mediated degradation of Cdc20 and other APC/C:Cdh1 targeted proteins in late mitosis/early G1"/>
</dbReference>
<dbReference type="Reactome" id="R-BTA-174184">
    <property type="pathway name" value="Cdc20:Phospho-APC/C mediated degradation of Cyclin A"/>
</dbReference>
<dbReference type="Reactome" id="R-BTA-179409">
    <property type="pathway name" value="APC-Cdc20 mediated degradation of Nek2A"/>
</dbReference>
<dbReference type="Reactome" id="R-BTA-1799339">
    <property type="pathway name" value="SRP-dependent cotranslational protein targeting to membrane"/>
</dbReference>
<dbReference type="Reactome" id="R-BTA-182971">
    <property type="pathway name" value="EGFR downregulation"/>
</dbReference>
<dbReference type="Reactome" id="R-BTA-187577">
    <property type="pathway name" value="SCF(Skp2)-mediated degradation of p27/p21"/>
</dbReference>
<dbReference type="Reactome" id="R-BTA-195253">
    <property type="pathway name" value="Degradation of beta-catenin by the destruction complex"/>
</dbReference>
<dbReference type="Reactome" id="R-BTA-201681">
    <property type="pathway name" value="TCF dependent signaling in response to WNT"/>
</dbReference>
<dbReference type="Reactome" id="R-BTA-202424">
    <property type="pathway name" value="Downstream TCR signaling"/>
</dbReference>
<dbReference type="Reactome" id="R-BTA-205043">
    <property type="pathway name" value="NRIF signals cell death from the nucleus"/>
</dbReference>
<dbReference type="Reactome" id="R-BTA-209543">
    <property type="pathway name" value="p75NTR recruits signalling complexes"/>
</dbReference>
<dbReference type="Reactome" id="R-BTA-209560">
    <property type="pathway name" value="NF-kB is activated and signals survival"/>
</dbReference>
<dbReference type="Reactome" id="R-BTA-2122948">
    <property type="pathway name" value="Activated NOTCH1 Transmits Signal to the Nucleus"/>
</dbReference>
<dbReference type="Reactome" id="R-BTA-2173788">
    <property type="pathway name" value="Downregulation of TGF-beta receptor signaling"/>
</dbReference>
<dbReference type="Reactome" id="R-BTA-2173791">
    <property type="pathway name" value="TGF-beta receptor signaling in EMT (epithelial to mesenchymal transition)"/>
</dbReference>
<dbReference type="Reactome" id="R-BTA-2173795">
    <property type="pathway name" value="Downregulation of SMAD2/3:SMAD4 transcriptional activity"/>
</dbReference>
<dbReference type="Reactome" id="R-BTA-2173796">
    <property type="pathway name" value="SMAD2/SMAD3:SMAD4 heterotrimer regulates transcription"/>
</dbReference>
<dbReference type="Reactome" id="R-BTA-2467813">
    <property type="pathway name" value="Separation of Sister Chromatids"/>
</dbReference>
<dbReference type="Reactome" id="R-BTA-2559582">
    <property type="pathway name" value="Senescence-Associated Secretory Phenotype (SASP)"/>
</dbReference>
<dbReference type="Reactome" id="R-BTA-2565942">
    <property type="pathway name" value="Regulation of PLK1 Activity at G2/M Transition"/>
</dbReference>
<dbReference type="Reactome" id="R-BTA-2871837">
    <property type="pathway name" value="FCERI mediated NF-kB activation"/>
</dbReference>
<dbReference type="Reactome" id="R-BTA-3134975">
    <property type="pathway name" value="Regulation of innate immune responses to cytosolic DNA"/>
</dbReference>
<dbReference type="Reactome" id="R-BTA-349425">
    <property type="pathway name" value="Autodegradation of the E3 ubiquitin ligase COP1"/>
</dbReference>
<dbReference type="Reactome" id="R-BTA-3769402">
    <property type="pathway name" value="Deactivation of the beta-catenin transactivating complex"/>
</dbReference>
<dbReference type="Reactome" id="R-BTA-382556">
    <property type="pathway name" value="ABC-family proteins mediated transport"/>
</dbReference>
<dbReference type="Reactome" id="R-BTA-450302">
    <property type="pathway name" value="activated TAK1 mediates p38 MAPK activation"/>
</dbReference>
<dbReference type="Reactome" id="R-BTA-450321">
    <property type="pathway name" value="JNK (c-Jun kinases) phosphorylation and activation mediated by activated human TAK1"/>
</dbReference>
<dbReference type="Reactome" id="R-BTA-450408">
    <property type="pathway name" value="AUF1 (hnRNP D0) binds and destabilizes mRNA"/>
</dbReference>
<dbReference type="Reactome" id="R-BTA-4608870">
    <property type="pathway name" value="Asymmetric localization of PCP proteins"/>
</dbReference>
<dbReference type="Reactome" id="R-BTA-4641257">
    <property type="pathway name" value="Degradation of AXIN"/>
</dbReference>
<dbReference type="Reactome" id="R-BTA-4641258">
    <property type="pathway name" value="Degradation of DVL"/>
</dbReference>
<dbReference type="Reactome" id="R-BTA-4641263">
    <property type="pathway name" value="Regulation of FZD by ubiquitination"/>
</dbReference>
<dbReference type="Reactome" id="R-BTA-532668">
    <property type="pathway name" value="N-glycan trimming in the ER and Calnexin/Calreticulin cycle"/>
</dbReference>
<dbReference type="Reactome" id="R-BTA-5357905">
    <property type="pathway name" value="Regulation of TNFR1 signaling"/>
</dbReference>
<dbReference type="Reactome" id="R-BTA-5357956">
    <property type="pathway name" value="TNFR1-induced NF-kappa-B signaling pathway"/>
</dbReference>
<dbReference type="Reactome" id="R-BTA-5358346">
    <property type="pathway name" value="Hedgehog ligand biogenesis"/>
</dbReference>
<dbReference type="Reactome" id="R-BTA-5607761">
    <property type="pathway name" value="Dectin-1 mediated noncanonical NF-kB signaling"/>
</dbReference>
<dbReference type="Reactome" id="R-BTA-5607764">
    <property type="pathway name" value="CLEC7A (Dectin-1) signaling"/>
</dbReference>
<dbReference type="Reactome" id="R-BTA-5610780">
    <property type="pathway name" value="Degradation of GLI1 by the proteasome"/>
</dbReference>
<dbReference type="Reactome" id="R-BTA-5610785">
    <property type="pathway name" value="GLI3 is processed to GLI3R by the proteasome"/>
</dbReference>
<dbReference type="Reactome" id="R-BTA-5632684">
    <property type="pathway name" value="Hedgehog 'on' state"/>
</dbReference>
<dbReference type="Reactome" id="R-BTA-5654726">
    <property type="pathway name" value="Negative regulation of FGFR1 signaling"/>
</dbReference>
<dbReference type="Reactome" id="R-BTA-5654727">
    <property type="pathway name" value="Negative regulation of FGFR2 signaling"/>
</dbReference>
<dbReference type="Reactome" id="R-BTA-5654732">
    <property type="pathway name" value="Negative regulation of FGFR3 signaling"/>
</dbReference>
<dbReference type="Reactome" id="R-BTA-5654733">
    <property type="pathway name" value="Negative regulation of FGFR4 signaling"/>
</dbReference>
<dbReference type="Reactome" id="R-BTA-5655862">
    <property type="pathway name" value="Translesion synthesis by POLK"/>
</dbReference>
<dbReference type="Reactome" id="R-BTA-5656121">
    <property type="pathway name" value="Translesion synthesis by POLI"/>
</dbReference>
<dbReference type="Reactome" id="R-BTA-5656169">
    <property type="pathway name" value="Termination of translesion DNA synthesis"/>
</dbReference>
<dbReference type="Reactome" id="R-BTA-5668541">
    <property type="pathway name" value="TNFR2 non-canonical NF-kB pathway"/>
</dbReference>
<dbReference type="Reactome" id="R-BTA-5675221">
    <property type="pathway name" value="Negative regulation of MAPK pathway"/>
</dbReference>
<dbReference type="Reactome" id="R-BTA-5675482">
    <property type="pathway name" value="Regulation of necroptotic cell death"/>
</dbReference>
<dbReference type="Reactome" id="R-BTA-5676590">
    <property type="pathway name" value="NIK--&gt;noncanonical NF-kB signaling"/>
</dbReference>
<dbReference type="Reactome" id="R-BTA-5684264">
    <property type="pathway name" value="MAP3K8 (TPL2)-dependent MAPK1/3 activation"/>
</dbReference>
<dbReference type="Reactome" id="R-BTA-5685942">
    <property type="pathway name" value="HDR through Homologous Recombination (HRR)"/>
</dbReference>
<dbReference type="Reactome" id="R-BTA-5687128">
    <property type="pathway name" value="MAPK6/MAPK4 signaling"/>
</dbReference>
<dbReference type="Reactome" id="R-BTA-5689603">
    <property type="pathway name" value="UCH proteinases"/>
</dbReference>
<dbReference type="Reactome" id="R-BTA-5689877">
    <property type="pathway name" value="Josephin domain DUBs"/>
</dbReference>
<dbReference type="Reactome" id="R-BTA-5689880">
    <property type="pathway name" value="Ub-specific processing proteases"/>
</dbReference>
<dbReference type="Reactome" id="R-BTA-5689896">
    <property type="pathway name" value="Ovarian tumor domain proteases"/>
</dbReference>
<dbReference type="Reactome" id="R-BTA-5689901">
    <property type="pathway name" value="Metalloprotease DUBs"/>
</dbReference>
<dbReference type="Reactome" id="R-BTA-5693565">
    <property type="pathway name" value="Recruitment and ATM-mediated phosphorylation of repair and signaling proteins at DNA double strand breaks"/>
</dbReference>
<dbReference type="Reactome" id="R-BTA-5693607">
    <property type="pathway name" value="Processing of DNA double-strand break ends"/>
</dbReference>
<dbReference type="Reactome" id="R-BTA-5696394">
    <property type="pathway name" value="DNA Damage Recognition in GG-NER"/>
</dbReference>
<dbReference type="Reactome" id="R-BTA-5696395">
    <property type="pathway name" value="Formation of Incision Complex in GG-NER"/>
</dbReference>
<dbReference type="Reactome" id="R-BTA-5696397">
    <property type="pathway name" value="Gap-filling DNA repair synthesis and ligation in GG-NER"/>
</dbReference>
<dbReference type="Reactome" id="R-BTA-5696400">
    <property type="pathway name" value="Dual Incision in GG-NER"/>
</dbReference>
<dbReference type="Reactome" id="R-BTA-6781823">
    <property type="pathway name" value="Formation of TC-NER Pre-Incision Complex"/>
</dbReference>
<dbReference type="Reactome" id="R-BTA-6782135">
    <property type="pathway name" value="Dual incision in TC-NER"/>
</dbReference>
<dbReference type="Reactome" id="R-BTA-6782210">
    <property type="pathway name" value="Gap-filling DNA repair synthesis and ligation in TC-NER"/>
</dbReference>
<dbReference type="Reactome" id="R-BTA-6783310">
    <property type="pathway name" value="Fanconi Anemia Pathway"/>
</dbReference>
<dbReference type="Reactome" id="R-BTA-6791226">
    <property type="pathway name" value="Major pathway of rRNA processing in the nucleolus and cytosol"/>
</dbReference>
<dbReference type="Reactome" id="R-BTA-6804756">
    <property type="pathway name" value="Regulation of TP53 Activity through Phosphorylation"/>
</dbReference>
<dbReference type="Reactome" id="R-BTA-6804757">
    <property type="pathway name" value="Regulation of TP53 Degradation"/>
</dbReference>
<dbReference type="Reactome" id="R-BTA-6804760">
    <property type="pathway name" value="Regulation of TP53 Activity through Methylation"/>
</dbReference>
<dbReference type="Reactome" id="R-BTA-6807004">
    <property type="pathway name" value="Negative regulation of MET activity"/>
</dbReference>
<dbReference type="Reactome" id="R-BTA-68867">
    <property type="pathway name" value="Assembly of the pre-replicative complex"/>
</dbReference>
<dbReference type="Reactome" id="R-BTA-68949">
    <property type="pathway name" value="Orc1 removal from chromatin"/>
</dbReference>
<dbReference type="Reactome" id="R-BTA-69017">
    <property type="pathway name" value="CDK-mediated phosphorylation and removal of Cdc6"/>
</dbReference>
<dbReference type="Reactome" id="R-BTA-69231">
    <property type="pathway name" value="Cyclin D associated events in G1"/>
</dbReference>
<dbReference type="Reactome" id="R-BTA-69481">
    <property type="pathway name" value="G2/M Checkpoints"/>
</dbReference>
<dbReference type="Reactome" id="R-BTA-69601">
    <property type="pathway name" value="Ubiquitin Mediated Degradation of Phosphorylated Cdc25A"/>
</dbReference>
<dbReference type="Reactome" id="R-BTA-72649">
    <property type="pathway name" value="Translation initiation complex formation"/>
</dbReference>
<dbReference type="Reactome" id="R-BTA-72689">
    <property type="pathway name" value="Formation of a pool of free 40S subunits"/>
</dbReference>
<dbReference type="Reactome" id="R-BTA-72695">
    <property type="pathway name" value="Formation of the ternary complex, and subsequently, the 43S complex"/>
</dbReference>
<dbReference type="Reactome" id="R-BTA-72702">
    <property type="pathway name" value="Ribosomal scanning and start codon recognition"/>
</dbReference>
<dbReference type="Reactome" id="R-BTA-72706">
    <property type="pathway name" value="GTP hydrolysis and joining of the 60S ribosomal subunit"/>
</dbReference>
<dbReference type="Reactome" id="R-BTA-75815">
    <property type="pathway name" value="Ubiquitin-dependent degradation of Cyclin D"/>
</dbReference>
<dbReference type="Reactome" id="R-BTA-8849469">
    <property type="pathway name" value="PTK6 Regulates RTKs and Their Effectors AKT1 and DOK1"/>
</dbReference>
<dbReference type="Reactome" id="R-BTA-8852276">
    <property type="pathway name" value="The role of GTSE1 in G2/M progression after G2 checkpoint"/>
</dbReference>
<dbReference type="Reactome" id="R-BTA-8854050">
    <property type="pathway name" value="FBXL7 down-regulates AURKA during mitotic entry and in early mitosis"/>
</dbReference>
<dbReference type="Reactome" id="R-BTA-8856825">
    <property type="pathway name" value="Cargo recognition for clathrin-mediated endocytosis"/>
</dbReference>
<dbReference type="Reactome" id="R-BTA-8856828">
    <property type="pathway name" value="Clathrin-mediated endocytosis"/>
</dbReference>
<dbReference type="Reactome" id="R-BTA-8863795">
    <property type="pathway name" value="Downregulation of ERBB2 signaling"/>
</dbReference>
<dbReference type="Reactome" id="R-BTA-8866427">
    <property type="pathway name" value="VLDLR internalisation and degradation"/>
</dbReference>
<dbReference type="Reactome" id="R-BTA-8866652">
    <property type="pathway name" value="Synthesis of active ubiquitin: roles of E1 and E2 enzymes"/>
</dbReference>
<dbReference type="Reactome" id="R-BTA-8866654">
    <property type="pathway name" value="E3 ubiquitin ligases ubiquitinate target proteins"/>
</dbReference>
<dbReference type="Reactome" id="R-BTA-8939236">
    <property type="pathway name" value="RUNX1 regulates transcription of genes involved in differentiation of HSCs"/>
</dbReference>
<dbReference type="Reactome" id="R-BTA-8939902">
    <property type="pathway name" value="Regulation of RUNX2 expression and activity"/>
</dbReference>
<dbReference type="Reactome" id="R-BTA-8941858">
    <property type="pathway name" value="Regulation of RUNX3 expression and activity"/>
</dbReference>
<dbReference type="Reactome" id="R-BTA-8948747">
    <property type="pathway name" value="Regulation of PTEN localization"/>
</dbReference>
<dbReference type="Reactome" id="R-BTA-8948751">
    <property type="pathway name" value="Regulation of PTEN stability and activity"/>
</dbReference>
<dbReference type="Reactome" id="R-BTA-8951664">
    <property type="pathway name" value="Neddylation"/>
</dbReference>
<dbReference type="Reactome" id="R-BTA-901032">
    <property type="pathway name" value="ER Quality Control Compartment (ERQC)"/>
</dbReference>
<dbReference type="Reactome" id="R-BTA-9010553">
    <property type="pathway name" value="Regulation of expression of SLITs and ROBOs"/>
</dbReference>
<dbReference type="Reactome" id="R-BTA-9020702">
    <property type="pathway name" value="Interleukin-1 signaling"/>
</dbReference>
<dbReference type="Reactome" id="R-BTA-9033241">
    <property type="pathway name" value="Peroxisomal protein import"/>
</dbReference>
<dbReference type="Reactome" id="R-BTA-909733">
    <property type="pathway name" value="Interferon alpha/beta signaling"/>
</dbReference>
<dbReference type="Reactome" id="R-BTA-912631">
    <property type="pathway name" value="Regulation of signaling by CBL"/>
</dbReference>
<dbReference type="Reactome" id="R-BTA-917729">
    <property type="pathway name" value="Endosomal Sorting Complex Required For Transport (ESCRT)"/>
</dbReference>
<dbReference type="Reactome" id="R-BTA-917937">
    <property type="pathway name" value="Iron uptake and transport"/>
</dbReference>
<dbReference type="Reactome" id="R-BTA-936440">
    <property type="pathway name" value="Negative regulators of DDX58/IFIH1 signaling"/>
</dbReference>
<dbReference type="Reactome" id="R-BTA-936964">
    <property type="pathway name" value="Activation of IRF3, IRF7 mediated by TBK1, IKKEpsilon (IKBKE)"/>
</dbReference>
<dbReference type="Reactome" id="R-BTA-937041">
    <property type="pathway name" value="IKK complex recruitment mediated by RIP1"/>
</dbReference>
<dbReference type="Reactome" id="R-BTA-937042">
    <property type="pathway name" value="IRAK2 mediated activation of TAK1 complex"/>
</dbReference>
<dbReference type="Reactome" id="R-BTA-937072">
    <property type="pathway name" value="TRAF6-mediated induction of TAK1 complex within TLR4 complex"/>
</dbReference>
<dbReference type="Reactome" id="R-BTA-9645460">
    <property type="pathway name" value="Alpha-protein kinase 1 signaling pathway"/>
</dbReference>
<dbReference type="Reactome" id="R-BTA-9646399">
    <property type="pathway name" value="Aggrephagy"/>
</dbReference>
<dbReference type="Reactome" id="R-BTA-9648002">
    <property type="pathway name" value="RAS processing"/>
</dbReference>
<dbReference type="Reactome" id="R-BTA-9664873">
    <property type="pathway name" value="Pexophagy"/>
</dbReference>
<dbReference type="Reactome" id="R-BTA-9705462">
    <property type="pathway name" value="Inactivation of CSF3 (G-CSF) signaling"/>
</dbReference>
<dbReference type="Reactome" id="R-BTA-9706369">
    <property type="pathway name" value="Negative regulation of FLT3"/>
</dbReference>
<dbReference type="Reactome" id="R-BTA-9708530">
    <property type="pathway name" value="Regulation of BACH1 activity"/>
</dbReference>
<dbReference type="Reactome" id="R-BTA-975163">
    <property type="pathway name" value="IRAK2 mediated activation of TAK1 complex upon TLR7/8 or 9 stimulation"/>
</dbReference>
<dbReference type="Reactome" id="R-BTA-9755511">
    <property type="pathway name" value="KEAP1-NFE2L2 pathway"/>
</dbReference>
<dbReference type="Reactome" id="R-BTA-9758274">
    <property type="pathway name" value="Regulation of NF-kappa B signaling"/>
</dbReference>
<dbReference type="Reactome" id="R-BTA-975956">
    <property type="pathway name" value="Nonsense Mediated Decay (NMD) independent of the Exon Junction Complex (EJC)"/>
</dbReference>
<dbReference type="Reactome" id="R-BTA-975957">
    <property type="pathway name" value="Nonsense Mediated Decay (NMD) enhanced by the Exon Junction Complex (EJC)"/>
</dbReference>
<dbReference type="Reactome" id="R-BTA-9762114">
    <property type="pathway name" value="GSK3B and BTRC:CUL1-mediated-degradation of NFE2L2"/>
</dbReference>
<dbReference type="Reactome" id="R-BTA-9824878">
    <property type="pathway name" value="Regulation of TBK1, IKKEpsilon (IKBKE)-mediated activation of IRF3, IRF7"/>
</dbReference>
<dbReference type="Reactome" id="R-BTA-983168">
    <property type="pathway name" value="Antigen processing: Ubiquitination &amp; Proteasome degradation"/>
</dbReference>
<dbReference type="Reactome" id="R-BTA-9861718">
    <property type="pathway name" value="Regulation of pyruvate metabolism"/>
</dbReference>
<dbReference type="EvolutionaryTrace" id="P62992"/>
<dbReference type="Proteomes" id="UP000009136">
    <property type="component" value="Chromosome 11"/>
</dbReference>
<dbReference type="GO" id="GO:0005737">
    <property type="term" value="C:cytoplasm"/>
    <property type="evidence" value="ECO:0000318"/>
    <property type="project" value="GO_Central"/>
</dbReference>
<dbReference type="GO" id="GO:0005730">
    <property type="term" value="C:nucleolus"/>
    <property type="evidence" value="ECO:0007669"/>
    <property type="project" value="UniProtKB-SubCell"/>
</dbReference>
<dbReference type="GO" id="GO:0005634">
    <property type="term" value="C:nucleus"/>
    <property type="evidence" value="ECO:0000318"/>
    <property type="project" value="GO_Central"/>
</dbReference>
<dbReference type="GO" id="GO:0005840">
    <property type="term" value="C:ribosome"/>
    <property type="evidence" value="ECO:0007669"/>
    <property type="project" value="UniProtKB-KW"/>
</dbReference>
<dbReference type="GO" id="GO:0032040">
    <property type="term" value="C:small-subunit processome"/>
    <property type="evidence" value="ECO:0000250"/>
    <property type="project" value="UniProtKB"/>
</dbReference>
<dbReference type="GO" id="GO:0031386">
    <property type="term" value="F:protein tag activity"/>
    <property type="evidence" value="ECO:0000318"/>
    <property type="project" value="GO_Central"/>
</dbReference>
<dbReference type="GO" id="GO:0003735">
    <property type="term" value="F:structural constituent of ribosome"/>
    <property type="evidence" value="ECO:0007669"/>
    <property type="project" value="InterPro"/>
</dbReference>
<dbReference type="GO" id="GO:0031625">
    <property type="term" value="F:ubiquitin protein ligase binding"/>
    <property type="evidence" value="ECO:0000318"/>
    <property type="project" value="GO_Central"/>
</dbReference>
<dbReference type="GO" id="GO:0008270">
    <property type="term" value="F:zinc ion binding"/>
    <property type="evidence" value="ECO:0007669"/>
    <property type="project" value="UniProtKB-KW"/>
</dbReference>
<dbReference type="GO" id="GO:0019941">
    <property type="term" value="P:modification-dependent protein catabolic process"/>
    <property type="evidence" value="ECO:0000318"/>
    <property type="project" value="GO_Central"/>
</dbReference>
<dbReference type="GO" id="GO:0016567">
    <property type="term" value="P:protein ubiquitination"/>
    <property type="evidence" value="ECO:0000318"/>
    <property type="project" value="GO_Central"/>
</dbReference>
<dbReference type="GO" id="GO:0042274">
    <property type="term" value="P:ribosomal small subunit biogenesis"/>
    <property type="evidence" value="ECO:0000250"/>
    <property type="project" value="UniProtKB"/>
</dbReference>
<dbReference type="GO" id="GO:0006412">
    <property type="term" value="P:translation"/>
    <property type="evidence" value="ECO:0007669"/>
    <property type="project" value="InterPro"/>
</dbReference>
<dbReference type="CDD" id="cd01803">
    <property type="entry name" value="Ubl_ubiquitin"/>
    <property type="match status" value="1"/>
</dbReference>
<dbReference type="FunFam" id="3.10.20.90:FF:000008">
    <property type="entry name" value="Ubiquitin-40S ribosomal protein S27a"/>
    <property type="match status" value="1"/>
</dbReference>
<dbReference type="Gene3D" id="6.20.50.150">
    <property type="match status" value="1"/>
</dbReference>
<dbReference type="Gene3D" id="3.10.20.90">
    <property type="entry name" value="Phosphatidylinositol 3-kinase Catalytic Subunit, Chain A, domain 1"/>
    <property type="match status" value="1"/>
</dbReference>
<dbReference type="InterPro" id="IPR002906">
    <property type="entry name" value="Ribosomal_eS31"/>
</dbReference>
<dbReference type="InterPro" id="IPR038582">
    <property type="entry name" value="Ribosomal_eS31_euk-type_sf"/>
</dbReference>
<dbReference type="InterPro" id="IPR011332">
    <property type="entry name" value="Ribosomal_zn-bd"/>
</dbReference>
<dbReference type="InterPro" id="IPR000626">
    <property type="entry name" value="Ubiquitin-like_dom"/>
</dbReference>
<dbReference type="InterPro" id="IPR029071">
    <property type="entry name" value="Ubiquitin-like_domsf"/>
</dbReference>
<dbReference type="InterPro" id="IPR019954">
    <property type="entry name" value="Ubiquitin_CS"/>
</dbReference>
<dbReference type="InterPro" id="IPR019956">
    <property type="entry name" value="Ubiquitin_dom"/>
</dbReference>
<dbReference type="InterPro" id="IPR050158">
    <property type="entry name" value="Ubiquitin_ubiquitin-like"/>
</dbReference>
<dbReference type="PANTHER" id="PTHR10666">
    <property type="entry name" value="UBIQUITIN"/>
    <property type="match status" value="1"/>
</dbReference>
<dbReference type="Pfam" id="PF01599">
    <property type="entry name" value="Ribosomal_S27"/>
    <property type="match status" value="1"/>
</dbReference>
<dbReference type="Pfam" id="PF00240">
    <property type="entry name" value="ubiquitin"/>
    <property type="match status" value="1"/>
</dbReference>
<dbReference type="PRINTS" id="PR00348">
    <property type="entry name" value="UBIQUITIN"/>
</dbReference>
<dbReference type="SMART" id="SM01402">
    <property type="entry name" value="Ribosomal_S27"/>
    <property type="match status" value="1"/>
</dbReference>
<dbReference type="SMART" id="SM00213">
    <property type="entry name" value="UBQ"/>
    <property type="match status" value="1"/>
</dbReference>
<dbReference type="SUPFAM" id="SSF54236">
    <property type="entry name" value="Ubiquitin-like"/>
    <property type="match status" value="1"/>
</dbReference>
<dbReference type="SUPFAM" id="SSF57829">
    <property type="entry name" value="Zn-binding ribosomal proteins"/>
    <property type="match status" value="1"/>
</dbReference>
<dbReference type="PROSITE" id="PS00299">
    <property type="entry name" value="UBIQUITIN_1"/>
    <property type="match status" value="1"/>
</dbReference>
<dbReference type="PROSITE" id="PS50053">
    <property type="entry name" value="UBIQUITIN_2"/>
    <property type="match status" value="1"/>
</dbReference>
<protein>
    <recommendedName>
        <fullName evidence="6">Ubiquitin-ribosomal protein eS31 fusion protein</fullName>
    </recommendedName>
    <alternativeName>
        <fullName>Ubiquitin carboxyl extension protein 80</fullName>
    </alternativeName>
    <component>
        <recommendedName>
            <fullName>Ubiquitin</fullName>
        </recommendedName>
    </component>
    <component>
        <recommendedName>
            <fullName evidence="6">Small ribosomal subunit protein eS31</fullName>
        </recommendedName>
        <alternativeName>
            <fullName>40S ribosomal protein S27a</fullName>
        </alternativeName>
    </component>
</protein>
<feature type="chain" id="PRO_0000396474" description="Ubiquitin">
    <location>
        <begin position="1"/>
        <end position="76"/>
    </location>
</feature>
<feature type="chain" id="PRO_0000137660" description="Small ribosomal subunit protein eS31">
    <location>
        <begin position="77"/>
        <end position="156"/>
    </location>
</feature>
<feature type="domain" description="Ubiquitin-like" evidence="4">
    <location>
        <begin position="1"/>
        <end position="76"/>
    </location>
</feature>
<feature type="zinc finger region" description="C4-type">
    <location>
        <begin position="121"/>
        <end position="144"/>
    </location>
</feature>
<feature type="region of interest" description="Disordered" evidence="5">
    <location>
        <begin position="76"/>
        <end position="95"/>
    </location>
</feature>
<feature type="site" description="Interacts with activating enzyme">
    <location>
        <position position="54"/>
    </location>
</feature>
<feature type="site" description="Essential for function">
    <location>
        <position position="68"/>
    </location>
</feature>
<feature type="site" description="Interacts with activating enzyme">
    <location>
        <position position="72"/>
    </location>
</feature>
<feature type="modified residue" description="Phosphoserine; by PINK1" evidence="2">
    <location>
        <position position="65"/>
    </location>
</feature>
<feature type="modified residue" description="ADP-ribosylglycine" evidence="2">
    <location>
        <position position="76"/>
    </location>
</feature>
<feature type="modified residue" description="N6-acetyllysine" evidence="2">
    <location>
        <position position="104"/>
    </location>
</feature>
<feature type="modified residue" description="N6-acetyllysine" evidence="2">
    <location>
        <position position="113"/>
    </location>
</feature>
<feature type="modified residue" description="N6-acetyllysine" evidence="3">
    <location>
        <position position="152"/>
    </location>
</feature>
<feature type="cross-link" description="Glycyl lysine isopeptide (Lys-Gly) (interchain with G-Cter in ubiquitin)" evidence="2">
    <location>
        <position position="6"/>
    </location>
</feature>
<feature type="cross-link" description="Glycyl lysine isopeptide (Lys-Gly) (interchain with G-Cter in ubiquitin)" evidence="2">
    <location>
        <position position="11"/>
    </location>
</feature>
<feature type="cross-link" description="Glycyl lysine isopeptide (Lys-Gly) (interchain with G-Cter in ubiquitin)" evidence="2">
    <location>
        <position position="27"/>
    </location>
</feature>
<feature type="cross-link" description="Glycyl lysine isopeptide (Lys-Gly) (interchain with G-Cter in ubiquitin)" evidence="2">
    <location>
        <position position="29"/>
    </location>
</feature>
<feature type="cross-link" description="Glycyl lysine isopeptide (Lys-Gly) (interchain with G-Cter in ubiquitin)" evidence="2">
    <location>
        <position position="33"/>
    </location>
</feature>
<feature type="cross-link" description="Glycyl lysine isopeptide (Lys-Gly) (interchain with G-Cter in ubiquitin)" evidence="2">
    <location>
        <position position="48"/>
    </location>
</feature>
<feature type="cross-link" description="Glycyl lysine isopeptide (Lys-Gly) (interchain with G-Cter in ubiquitin)" evidence="2">
    <location>
        <position position="63"/>
    </location>
</feature>
<feature type="cross-link" description="Glycyl lysine isopeptide (Gly-Lys) (interchain with K-? in acceptor proteins)">
    <location>
        <position position="76"/>
    </location>
</feature>
<feature type="cross-link" description="Glycyl lysine isopeptide (Lys-Gly) (interchain with G-Cter in ubiquitin)" evidence="2">
    <location>
        <position position="107"/>
    </location>
</feature>
<feature type="cross-link" description="Glycyl lysine isopeptide (Lys-Gly) (interchain with G-Cter in ubiquitin)" evidence="2">
    <location>
        <position position="113"/>
    </location>
</feature>
<feature type="sequence conflict" description="In Ref. 2; BAC56381." evidence="6" ref="2">
    <original>CGKCCLTYCFNKPEDK</original>
    <variation>VANVV</variation>
    <location>
        <begin position="141"/>
        <end position="156"/>
    </location>
</feature>
<feature type="strand" evidence="9">
    <location>
        <begin position="2"/>
        <end position="7"/>
    </location>
</feature>
<feature type="strand" evidence="8">
    <location>
        <begin position="8"/>
        <end position="10"/>
    </location>
</feature>
<feature type="strand" evidence="9">
    <location>
        <begin position="12"/>
        <end position="16"/>
    </location>
</feature>
<feature type="helix" evidence="9">
    <location>
        <begin position="23"/>
        <end position="34"/>
    </location>
</feature>
<feature type="helix" evidence="9">
    <location>
        <begin position="38"/>
        <end position="40"/>
    </location>
</feature>
<feature type="strand" evidence="9">
    <location>
        <begin position="41"/>
        <end position="45"/>
    </location>
</feature>
<feature type="helix" evidence="9">
    <location>
        <begin position="57"/>
        <end position="59"/>
    </location>
</feature>
<feature type="strand" evidence="9">
    <location>
        <begin position="66"/>
        <end position="71"/>
    </location>
</feature>
<feature type="strand" evidence="7">
    <location>
        <begin position="73"/>
        <end position="75"/>
    </location>
</feature>